<accession>P45613</accession>
<accession>Q2SRD8</accession>
<dbReference type="EMBL" id="L22432">
    <property type="protein sequence ID" value="AAA16214.1"/>
    <property type="molecule type" value="Unassigned_DNA"/>
</dbReference>
<dbReference type="EMBL" id="CP000123">
    <property type="protein sequence ID" value="ABC01575.1"/>
    <property type="molecule type" value="Genomic_DNA"/>
</dbReference>
<dbReference type="PIR" id="B49683">
    <property type="entry name" value="B49683"/>
</dbReference>
<dbReference type="RefSeq" id="WP_011387559.1">
    <property type="nucleotide sequence ID" value="NC_007633.1"/>
</dbReference>
<dbReference type="GeneID" id="23778331"/>
<dbReference type="KEGG" id="mcp:MCAP_0715"/>
<dbReference type="HOGENOM" id="CLU_780555_0_0_14"/>
<dbReference type="PhylomeDB" id="P45613"/>
<dbReference type="Proteomes" id="UP000001928">
    <property type="component" value="Chromosome"/>
</dbReference>
<dbReference type="GO" id="GO:0004175">
    <property type="term" value="F:endopeptidase activity"/>
    <property type="evidence" value="ECO:0007669"/>
    <property type="project" value="UniProtKB-ARBA"/>
</dbReference>
<dbReference type="GO" id="GO:0080120">
    <property type="term" value="P:CAAX-box protein maturation"/>
    <property type="evidence" value="ECO:0007669"/>
    <property type="project" value="UniProtKB-ARBA"/>
</dbReference>
<dbReference type="InterPro" id="IPR052710">
    <property type="entry name" value="CAAX_protease"/>
</dbReference>
<dbReference type="InterPro" id="IPR003675">
    <property type="entry name" value="Rce1/LyrA-like_dom"/>
</dbReference>
<dbReference type="PANTHER" id="PTHR36435:SF1">
    <property type="entry name" value="CAAX AMINO TERMINAL PROTEASE FAMILY PROTEIN"/>
    <property type="match status" value="1"/>
</dbReference>
<dbReference type="PANTHER" id="PTHR36435">
    <property type="entry name" value="SLR1288 PROTEIN"/>
    <property type="match status" value="1"/>
</dbReference>
<dbReference type="Pfam" id="PF02517">
    <property type="entry name" value="Rce1-like"/>
    <property type="match status" value="1"/>
</dbReference>
<feature type="chain" id="PRO_0000066399" description="Uncharacterized protein MCAP_0715">
    <location>
        <begin position="1"/>
        <end position="336"/>
    </location>
</feature>
<gene>
    <name type="ordered locus">MCAP_0715</name>
</gene>
<name>Y715_MYCCT</name>
<proteinExistence type="predicted"/>
<sequence>MIKKSSIKKYFKTIKDSSIKDISVDQQYPFDFKFYKPKVEGMIILFSLVILPLITVIFLNVFKTQLNITDERLGLIFQLSSILFTLVGAIIFWSRNPMSFWKSGVGILFGFPIFLQLFGLAFGLLANLVGVFNNNNNNAWSDIYNLLVQSVAEILVIIFAFSKINNLKSKVKKTFKENKKLLIPIAIAFAIVAFFVGNTLYSLIITELKLNLGESKNQEGLVSPFKVQGITKYIYMVLFIILTVFIAPLCEEIVARQALFTGVSNKVLSIIVSSLYFGILHISSGDVYNIFPYVIGGFFFSLAFSFSKGNLSYCWLSHSFYNLISVVLIIASLYIK</sequence>
<organism>
    <name type="scientific">Mycoplasma capricolum subsp. capricolum (strain California kid / ATCC 27343 / NCTC 10154)</name>
    <dbReference type="NCBI Taxonomy" id="340047"/>
    <lineage>
        <taxon>Bacteria</taxon>
        <taxon>Bacillati</taxon>
        <taxon>Mycoplasmatota</taxon>
        <taxon>Mollicutes</taxon>
        <taxon>Mycoplasmataceae</taxon>
        <taxon>Mycoplasma</taxon>
    </lineage>
</organism>
<protein>
    <recommendedName>
        <fullName>Uncharacterized protein MCAP_0715</fullName>
    </recommendedName>
    <alternativeName>
        <fullName>ORF1</fullName>
    </alternativeName>
</protein>
<reference key="1">
    <citation type="journal article" date="1993" name="J. Biol. Chem.">
        <title>Unique monocistronic operon (ptsH) in Mycoplasma capricolum encoding the phosphocarrier protein, HPr, of the phosphoenolpyruvate:sugar phosphotransferase system. Cloning, sequencing, and characterization of ptsH.</title>
        <authorList>
            <person name="Zhu P.-P."/>
            <person name="Reizer J."/>
            <person name="Reizer A."/>
            <person name="Peterkofsky A."/>
        </authorList>
    </citation>
    <scope>NUCLEOTIDE SEQUENCE [GENOMIC DNA]</scope>
</reference>
<reference key="2">
    <citation type="submission" date="2005-09" db="EMBL/GenBank/DDBJ databases">
        <authorList>
            <person name="Glass J.I."/>
            <person name="Lartigue C."/>
            <person name="Pfannkoch C."/>
            <person name="Baden-Tillson H."/>
            <person name="Smith H.O."/>
            <person name="Venter J.C."/>
            <person name="Roske K."/>
            <person name="Wise K.S."/>
            <person name="Calcutt M.J."/>
            <person name="Nelson W.C."/>
            <person name="Nierman W.C."/>
        </authorList>
    </citation>
    <scope>NUCLEOTIDE SEQUENCE [LARGE SCALE GENOMIC DNA]</scope>
    <source>
        <strain>California kid / ATCC 27343 / NCTC 10154</strain>
    </source>
</reference>